<proteinExistence type="evidence at transcript level"/>
<reference key="1">
    <citation type="journal article" date="2005" name="Nature">
        <title>The map-based sequence of the rice genome.</title>
        <authorList>
            <consortium name="International rice genome sequencing project (IRGSP)"/>
        </authorList>
    </citation>
    <scope>NUCLEOTIDE SEQUENCE [LARGE SCALE GENOMIC DNA]</scope>
    <source>
        <strain>cv. Nipponbare</strain>
    </source>
</reference>
<reference key="2">
    <citation type="journal article" date="2008" name="Nucleic Acids Res.">
        <title>The rice annotation project database (RAP-DB): 2008 update.</title>
        <authorList>
            <consortium name="The rice annotation project (RAP)"/>
        </authorList>
    </citation>
    <scope>GENOME REANNOTATION</scope>
    <source>
        <strain>cv. Nipponbare</strain>
    </source>
</reference>
<reference key="3">
    <citation type="journal article" date="2013" name="Rice">
        <title>Improvement of the Oryza sativa Nipponbare reference genome using next generation sequence and optical map data.</title>
        <authorList>
            <person name="Kawahara Y."/>
            <person name="de la Bastide M."/>
            <person name="Hamilton J.P."/>
            <person name="Kanamori H."/>
            <person name="McCombie W.R."/>
            <person name="Ouyang S."/>
            <person name="Schwartz D.C."/>
            <person name="Tanaka T."/>
            <person name="Wu J."/>
            <person name="Zhou S."/>
            <person name="Childs K.L."/>
            <person name="Davidson R.M."/>
            <person name="Lin H."/>
            <person name="Quesada-Ocampo L."/>
            <person name="Vaillancourt B."/>
            <person name="Sakai H."/>
            <person name="Lee S.S."/>
            <person name="Kim J."/>
            <person name="Numa H."/>
            <person name="Itoh T."/>
            <person name="Buell C.R."/>
            <person name="Matsumoto T."/>
        </authorList>
    </citation>
    <scope>GENOME REANNOTATION</scope>
    <source>
        <strain>cv. Nipponbare</strain>
    </source>
</reference>
<reference key="4">
    <citation type="journal article" date="2005" name="PLoS Biol.">
        <title>The genomes of Oryza sativa: a history of duplications.</title>
        <authorList>
            <person name="Yu J."/>
            <person name="Wang J."/>
            <person name="Lin W."/>
            <person name="Li S."/>
            <person name="Li H."/>
            <person name="Zhou J."/>
            <person name="Ni P."/>
            <person name="Dong W."/>
            <person name="Hu S."/>
            <person name="Zeng C."/>
            <person name="Zhang J."/>
            <person name="Zhang Y."/>
            <person name="Li R."/>
            <person name="Xu Z."/>
            <person name="Li S."/>
            <person name="Li X."/>
            <person name="Zheng H."/>
            <person name="Cong L."/>
            <person name="Lin L."/>
            <person name="Yin J."/>
            <person name="Geng J."/>
            <person name="Li G."/>
            <person name="Shi J."/>
            <person name="Liu J."/>
            <person name="Lv H."/>
            <person name="Li J."/>
            <person name="Wang J."/>
            <person name="Deng Y."/>
            <person name="Ran L."/>
            <person name="Shi X."/>
            <person name="Wang X."/>
            <person name="Wu Q."/>
            <person name="Li C."/>
            <person name="Ren X."/>
            <person name="Wang J."/>
            <person name="Wang X."/>
            <person name="Li D."/>
            <person name="Liu D."/>
            <person name="Zhang X."/>
            <person name="Ji Z."/>
            <person name="Zhao W."/>
            <person name="Sun Y."/>
            <person name="Zhang Z."/>
            <person name="Bao J."/>
            <person name="Han Y."/>
            <person name="Dong L."/>
            <person name="Ji J."/>
            <person name="Chen P."/>
            <person name="Wu S."/>
            <person name="Liu J."/>
            <person name="Xiao Y."/>
            <person name="Bu D."/>
            <person name="Tan J."/>
            <person name="Yang L."/>
            <person name="Ye C."/>
            <person name="Zhang J."/>
            <person name="Xu J."/>
            <person name="Zhou Y."/>
            <person name="Yu Y."/>
            <person name="Zhang B."/>
            <person name="Zhuang S."/>
            <person name="Wei H."/>
            <person name="Liu B."/>
            <person name="Lei M."/>
            <person name="Yu H."/>
            <person name="Li Y."/>
            <person name="Xu H."/>
            <person name="Wei S."/>
            <person name="He X."/>
            <person name="Fang L."/>
            <person name="Zhang Z."/>
            <person name="Zhang Y."/>
            <person name="Huang X."/>
            <person name="Su Z."/>
            <person name="Tong W."/>
            <person name="Li J."/>
            <person name="Tong Z."/>
            <person name="Li S."/>
            <person name="Ye J."/>
            <person name="Wang L."/>
            <person name="Fang L."/>
            <person name="Lei T."/>
            <person name="Chen C.-S."/>
            <person name="Chen H.-C."/>
            <person name="Xu Z."/>
            <person name="Li H."/>
            <person name="Huang H."/>
            <person name="Zhang F."/>
            <person name="Xu H."/>
            <person name="Li N."/>
            <person name="Zhao C."/>
            <person name="Li S."/>
            <person name="Dong L."/>
            <person name="Huang Y."/>
            <person name="Li L."/>
            <person name="Xi Y."/>
            <person name="Qi Q."/>
            <person name="Li W."/>
            <person name="Zhang B."/>
            <person name="Hu W."/>
            <person name="Zhang Y."/>
            <person name="Tian X."/>
            <person name="Jiao Y."/>
            <person name="Liang X."/>
            <person name="Jin J."/>
            <person name="Gao L."/>
            <person name="Zheng W."/>
            <person name="Hao B."/>
            <person name="Liu S.-M."/>
            <person name="Wang W."/>
            <person name="Yuan L."/>
            <person name="Cao M."/>
            <person name="McDermott J."/>
            <person name="Samudrala R."/>
            <person name="Wang J."/>
            <person name="Wong G.K.-S."/>
            <person name="Yang H."/>
        </authorList>
    </citation>
    <scope>NUCLEOTIDE SEQUENCE [LARGE SCALE GENOMIC DNA]</scope>
    <source>
        <strain>cv. Nipponbare</strain>
    </source>
</reference>
<reference key="5">
    <citation type="journal article" date="2003" name="Science">
        <title>Collection, mapping, and annotation of over 28,000 cDNA clones from japonica rice.</title>
        <authorList>
            <consortium name="The rice full-length cDNA consortium"/>
        </authorList>
    </citation>
    <scope>NUCLEOTIDE SEQUENCE [LARGE SCALE MRNA]</scope>
    <source>
        <strain>cv. Nipponbare</strain>
    </source>
</reference>
<keyword id="KW-0040">ANK repeat</keyword>
<keyword id="KW-0479">Metal-binding</keyword>
<keyword id="KW-1185">Reference proteome</keyword>
<keyword id="KW-0677">Repeat</keyword>
<keyword id="KW-0808">Transferase</keyword>
<keyword id="KW-0833">Ubl conjugation pathway</keyword>
<keyword id="KW-0862">Zinc</keyword>
<keyword id="KW-0863">Zinc-finger</keyword>
<protein>
    <recommendedName>
        <fullName>Probable E3 ubiquitin-protein ligase XBOS32</fullName>
        <ecNumber>2.3.2.27</ecNumber>
    </recommendedName>
    <alternativeName>
        <fullName>Ankyrin repeat domain and RING finger-containing protein XBOS32</fullName>
    </alternativeName>
    <alternativeName>
        <fullName>RING-type E3 ubiquitin transferase XBOS32</fullName>
    </alternativeName>
    <alternativeName>
        <fullName>XB3 protein homolog 2</fullName>
    </alternativeName>
</protein>
<name>XB32_ORYSJ</name>
<comment type="catalytic activity">
    <reaction>
        <text>S-ubiquitinyl-[E2 ubiquitin-conjugating enzyme]-L-cysteine + [acceptor protein]-L-lysine = [E2 ubiquitin-conjugating enzyme]-L-cysteine + N(6)-ubiquitinyl-[acceptor protein]-L-lysine.</text>
        <dbReference type="EC" id="2.3.2.27"/>
    </reaction>
</comment>
<comment type="pathway">
    <text>Protein modification; protein ubiquitination.</text>
</comment>
<comment type="sequence caution" evidence="2">
    <conflict type="erroneous initiation">
        <sequence resource="EMBL-CDS" id="BAD19119"/>
    </conflict>
    <text>Extended N-terminus.</text>
</comment>
<comment type="sequence caution" evidence="2">
    <conflict type="erroneous initiation">
        <sequence resource="EMBL-CDS" id="BAF10271"/>
    </conflict>
    <text>Extended N-terminus.</text>
</comment>
<comment type="sequence caution" evidence="2">
    <conflict type="erroneous initiation">
        <sequence resource="EMBL-CDS" id="BAH00102"/>
    </conflict>
    <text>Extended N-terminus.</text>
</comment>
<sequence>MGFLSLVGNSFGCSASGERLVSAARDGDLQEARALLEYNPRLARYSTFGGRNSPLHYAAAQGHHEIVSLLLESGVEINLRNYRGQTALMQACQYGHWEVVQTLMLFNANVHRTDYLNGGSALHFAALHGHARCLRLVLADYVPSMPNFWNSMKDSLSEEGPSADLDEDGLFKMVNQKADGGLTPLHMAALNGHVECVQLLLDLGASVIEATIEDGTTIDLIGAGSTPLHYAACGGNAVCCQLLIARGASLSAQNASGWTPLMVARSWHRNSLEEILSKEPESRIRTVPSPYLCLPLMSIMSIAREFGWRYLNQSPVCIDPCAVCLEGSCSVAAEGCKHEFCTRCALYLCSTSYTSVSPAGAIPCPLCRHPIIAFTALPGTSPIRELPRNSLSLSFCTTCPAVNSDSTPSIASHLYRTEFQCARMPPMGSSSFRSLSCQRLPAMKLNPSFCMGAMDTNPCLIRCSRFGPSFRRSASQGESSRRAWPLTFDPIAATGS</sequence>
<accession>Q6KAE5</accession>
<accession>A3AC59</accession>
<gene>
    <name type="primary">XBOS32</name>
    <name type="ordered locus">Os02g0791200</name>
    <name type="ordered locus">LOC_Os02g54860</name>
    <name type="ORF">OJ1046_F07.26</name>
    <name type="ORF">OsJ_08676</name>
</gene>
<dbReference type="EC" id="2.3.2.27"/>
<dbReference type="EMBL" id="AP003984">
    <property type="protein sequence ID" value="BAD19119.1"/>
    <property type="status" value="ALT_INIT"/>
    <property type="molecule type" value="Genomic_DNA"/>
</dbReference>
<dbReference type="EMBL" id="AP008208">
    <property type="protein sequence ID" value="BAF10271.1"/>
    <property type="status" value="ALT_INIT"/>
    <property type="molecule type" value="Genomic_DNA"/>
</dbReference>
<dbReference type="EMBL" id="AP014958">
    <property type="status" value="NOT_ANNOTATED_CDS"/>
    <property type="molecule type" value="Genomic_DNA"/>
</dbReference>
<dbReference type="EMBL" id="CM000139">
    <property type="protein sequence ID" value="EAZ24898.1"/>
    <property type="molecule type" value="Genomic_DNA"/>
</dbReference>
<dbReference type="EMBL" id="AK120632">
    <property type="protein sequence ID" value="BAH00102.1"/>
    <property type="status" value="ALT_INIT"/>
    <property type="molecule type" value="mRNA"/>
</dbReference>
<dbReference type="RefSeq" id="XP_015622987.1">
    <property type="nucleotide sequence ID" value="XM_015767501.1"/>
</dbReference>
<dbReference type="RefSeq" id="XP_015622989.1">
    <property type="nucleotide sequence ID" value="XM_015767503.1"/>
</dbReference>
<dbReference type="SMR" id="Q6KAE5"/>
<dbReference type="FunCoup" id="Q6KAE5">
    <property type="interactions" value="888"/>
</dbReference>
<dbReference type="STRING" id="39947.Q6KAE5"/>
<dbReference type="PaxDb" id="39947-Q6KAE5"/>
<dbReference type="KEGG" id="dosa:Os02g0791200"/>
<dbReference type="eggNOG" id="ENOG502QR1Y">
    <property type="taxonomic scope" value="Eukaryota"/>
</dbReference>
<dbReference type="HOGENOM" id="CLU_035461_0_0_1"/>
<dbReference type="InParanoid" id="Q6KAE5"/>
<dbReference type="OrthoDB" id="20872at2759"/>
<dbReference type="UniPathway" id="UPA00143"/>
<dbReference type="Proteomes" id="UP000000763">
    <property type="component" value="Chromosome 2"/>
</dbReference>
<dbReference type="Proteomes" id="UP000007752">
    <property type="component" value="Chromosome 2"/>
</dbReference>
<dbReference type="Proteomes" id="UP000059680">
    <property type="component" value="Chromosome 2"/>
</dbReference>
<dbReference type="GO" id="GO:0016740">
    <property type="term" value="F:transferase activity"/>
    <property type="evidence" value="ECO:0007669"/>
    <property type="project" value="UniProtKB-KW"/>
</dbReference>
<dbReference type="GO" id="GO:0008270">
    <property type="term" value="F:zinc ion binding"/>
    <property type="evidence" value="ECO:0007669"/>
    <property type="project" value="UniProtKB-KW"/>
</dbReference>
<dbReference type="GO" id="GO:0016567">
    <property type="term" value="P:protein ubiquitination"/>
    <property type="evidence" value="ECO:0007669"/>
    <property type="project" value="UniProtKB-UniPathway"/>
</dbReference>
<dbReference type="Gene3D" id="1.25.40.20">
    <property type="entry name" value="Ankyrin repeat-containing domain"/>
    <property type="match status" value="2"/>
</dbReference>
<dbReference type="InterPro" id="IPR050663">
    <property type="entry name" value="Ankyrin-SOCS_Box"/>
</dbReference>
<dbReference type="InterPro" id="IPR002110">
    <property type="entry name" value="Ankyrin_rpt"/>
</dbReference>
<dbReference type="InterPro" id="IPR036770">
    <property type="entry name" value="Ankyrin_rpt-contain_sf"/>
</dbReference>
<dbReference type="InterPro" id="IPR056760">
    <property type="entry name" value="RING_XB3-like"/>
</dbReference>
<dbReference type="InterPro" id="IPR001841">
    <property type="entry name" value="Znf_RING"/>
</dbReference>
<dbReference type="InterPro" id="IPR017907">
    <property type="entry name" value="Znf_RING_CS"/>
</dbReference>
<dbReference type="PANTHER" id="PTHR24193:SF121">
    <property type="entry name" value="ADA2A-CONTAINING COMPLEX COMPONENT 3, ISOFORM D"/>
    <property type="match status" value="1"/>
</dbReference>
<dbReference type="PANTHER" id="PTHR24193">
    <property type="entry name" value="ANKYRIN REPEAT PROTEIN"/>
    <property type="match status" value="1"/>
</dbReference>
<dbReference type="Pfam" id="PF12796">
    <property type="entry name" value="Ank_2"/>
    <property type="match status" value="2"/>
</dbReference>
<dbReference type="Pfam" id="PF13637">
    <property type="entry name" value="Ank_4"/>
    <property type="match status" value="1"/>
</dbReference>
<dbReference type="Pfam" id="PF24921">
    <property type="entry name" value="RING_XB3-XBAT31"/>
    <property type="match status" value="1"/>
</dbReference>
<dbReference type="PRINTS" id="PR01415">
    <property type="entry name" value="ANKYRIN"/>
</dbReference>
<dbReference type="SMART" id="SM00248">
    <property type="entry name" value="ANK"/>
    <property type="match status" value="6"/>
</dbReference>
<dbReference type="SMART" id="SM00184">
    <property type="entry name" value="RING"/>
    <property type="match status" value="1"/>
</dbReference>
<dbReference type="SUPFAM" id="SSF48403">
    <property type="entry name" value="Ankyrin repeat"/>
    <property type="match status" value="1"/>
</dbReference>
<dbReference type="SUPFAM" id="SSF57850">
    <property type="entry name" value="RING/U-box"/>
    <property type="match status" value="1"/>
</dbReference>
<dbReference type="PROSITE" id="PS50297">
    <property type="entry name" value="ANK_REP_REGION"/>
    <property type="match status" value="1"/>
</dbReference>
<dbReference type="PROSITE" id="PS50088">
    <property type="entry name" value="ANK_REPEAT"/>
    <property type="match status" value="4"/>
</dbReference>
<dbReference type="PROSITE" id="PS00518">
    <property type="entry name" value="ZF_RING_1"/>
    <property type="match status" value="1"/>
</dbReference>
<dbReference type="PROSITE" id="PS50089">
    <property type="entry name" value="ZF_RING_2"/>
    <property type="match status" value="1"/>
</dbReference>
<organism>
    <name type="scientific">Oryza sativa subsp. japonica</name>
    <name type="common">Rice</name>
    <dbReference type="NCBI Taxonomy" id="39947"/>
    <lineage>
        <taxon>Eukaryota</taxon>
        <taxon>Viridiplantae</taxon>
        <taxon>Streptophyta</taxon>
        <taxon>Embryophyta</taxon>
        <taxon>Tracheophyta</taxon>
        <taxon>Spermatophyta</taxon>
        <taxon>Magnoliopsida</taxon>
        <taxon>Liliopsida</taxon>
        <taxon>Poales</taxon>
        <taxon>Poaceae</taxon>
        <taxon>BOP clade</taxon>
        <taxon>Oryzoideae</taxon>
        <taxon>Oryzeae</taxon>
        <taxon>Oryzinae</taxon>
        <taxon>Oryza</taxon>
        <taxon>Oryza sativa</taxon>
    </lineage>
</organism>
<evidence type="ECO:0000255" key="1">
    <source>
        <dbReference type="PROSITE-ProRule" id="PRU00175"/>
    </source>
</evidence>
<evidence type="ECO:0000305" key="2"/>
<feature type="chain" id="PRO_0000395746" description="Probable E3 ubiquitin-protein ligase XBOS32">
    <location>
        <begin position="1"/>
        <end position="496"/>
    </location>
</feature>
<feature type="repeat" description="ANK 1">
    <location>
        <begin position="50"/>
        <end position="79"/>
    </location>
</feature>
<feature type="repeat" description="ANK 2">
    <location>
        <begin position="83"/>
        <end position="112"/>
    </location>
</feature>
<feature type="repeat" description="ANK 3">
    <location>
        <begin position="117"/>
        <end position="147"/>
    </location>
</feature>
<feature type="repeat" description="ANK 4">
    <location>
        <begin position="180"/>
        <end position="209"/>
    </location>
</feature>
<feature type="repeat" description="ANK 5">
    <location>
        <begin position="223"/>
        <end position="252"/>
    </location>
</feature>
<feature type="zinc finger region" description="RING-type" evidence="1">
    <location>
        <begin position="321"/>
        <end position="368"/>
    </location>
</feature>